<organism>
    <name type="scientific">Escherichia coli O139:H28 (strain E24377A / ETEC)</name>
    <dbReference type="NCBI Taxonomy" id="331111"/>
    <lineage>
        <taxon>Bacteria</taxon>
        <taxon>Pseudomonadati</taxon>
        <taxon>Pseudomonadota</taxon>
        <taxon>Gammaproteobacteria</taxon>
        <taxon>Enterobacterales</taxon>
        <taxon>Enterobacteriaceae</taxon>
        <taxon>Escherichia</taxon>
    </lineage>
</organism>
<name>FOLD_ECO24</name>
<feature type="chain" id="PRO_1000069240" description="Bifunctional protein FolD">
    <location>
        <begin position="1"/>
        <end position="288"/>
    </location>
</feature>
<feature type="binding site" evidence="1">
    <location>
        <begin position="166"/>
        <end position="168"/>
    </location>
    <ligand>
        <name>NADP(+)</name>
        <dbReference type="ChEBI" id="CHEBI:58349"/>
    </ligand>
</feature>
<feature type="binding site" evidence="1">
    <location>
        <position position="232"/>
    </location>
    <ligand>
        <name>NADP(+)</name>
        <dbReference type="ChEBI" id="CHEBI:58349"/>
    </ligand>
</feature>
<comment type="function">
    <text evidence="1">Catalyzes the oxidation of 5,10-methylenetetrahydrofolate to 5,10-methenyltetrahydrofolate and then the hydrolysis of 5,10-methenyltetrahydrofolate to 10-formyltetrahydrofolate.</text>
</comment>
<comment type="catalytic activity">
    <reaction evidence="1">
        <text>(6R)-5,10-methylene-5,6,7,8-tetrahydrofolate + NADP(+) = (6R)-5,10-methenyltetrahydrofolate + NADPH</text>
        <dbReference type="Rhea" id="RHEA:22812"/>
        <dbReference type="ChEBI" id="CHEBI:15636"/>
        <dbReference type="ChEBI" id="CHEBI:57455"/>
        <dbReference type="ChEBI" id="CHEBI:57783"/>
        <dbReference type="ChEBI" id="CHEBI:58349"/>
        <dbReference type="EC" id="1.5.1.5"/>
    </reaction>
</comment>
<comment type="catalytic activity">
    <reaction evidence="1">
        <text>(6R)-5,10-methenyltetrahydrofolate + H2O = (6R)-10-formyltetrahydrofolate + H(+)</text>
        <dbReference type="Rhea" id="RHEA:23700"/>
        <dbReference type="ChEBI" id="CHEBI:15377"/>
        <dbReference type="ChEBI" id="CHEBI:15378"/>
        <dbReference type="ChEBI" id="CHEBI:57455"/>
        <dbReference type="ChEBI" id="CHEBI:195366"/>
        <dbReference type="EC" id="3.5.4.9"/>
    </reaction>
</comment>
<comment type="pathway">
    <text evidence="1">One-carbon metabolism; tetrahydrofolate interconversion.</text>
</comment>
<comment type="subunit">
    <text evidence="1">Homodimer.</text>
</comment>
<comment type="similarity">
    <text evidence="1">Belongs to the tetrahydrofolate dehydrogenase/cyclohydrolase family.</text>
</comment>
<proteinExistence type="inferred from homology"/>
<sequence>MAAKIIDGKTIAQQVRSEVAQKVQARIAAGLRAPGLAVVLVGSNPASQIYVASKRKACEEVGFVSRSYDLPETTSEAELLELIDALNADNTIDGILVQLPLPAGIDNVKVLERIHPDKDVDGFHPYNVGRLCQRAPRLRPCTPRGIVTLLERYNIDTFGLNAVVIGASNIVGRPMSMELLLAGCTTTVTHRFTKNLRHHVENADLLIVAVGKPGFIPGDWIKEGAIVIDVGINRLENGKVVGDVVFEDAAKRASYITPVPGGVGPMTVATLIENTLQACVEYHDPQDE</sequence>
<dbReference type="EC" id="1.5.1.5" evidence="1"/>
<dbReference type="EC" id="3.5.4.9" evidence="1"/>
<dbReference type="EMBL" id="CP000800">
    <property type="protein sequence ID" value="ABV17812.1"/>
    <property type="molecule type" value="Genomic_DNA"/>
</dbReference>
<dbReference type="RefSeq" id="WP_000729154.1">
    <property type="nucleotide sequence ID" value="NC_009801.1"/>
</dbReference>
<dbReference type="SMR" id="A7ZIT8"/>
<dbReference type="GeneID" id="75204395"/>
<dbReference type="KEGG" id="ecw:EcE24377A_0570"/>
<dbReference type="HOGENOM" id="CLU_034045_2_1_6"/>
<dbReference type="UniPathway" id="UPA00193"/>
<dbReference type="Proteomes" id="UP000001122">
    <property type="component" value="Chromosome"/>
</dbReference>
<dbReference type="GO" id="GO:0005829">
    <property type="term" value="C:cytosol"/>
    <property type="evidence" value="ECO:0007669"/>
    <property type="project" value="TreeGrafter"/>
</dbReference>
<dbReference type="GO" id="GO:0004477">
    <property type="term" value="F:methenyltetrahydrofolate cyclohydrolase activity"/>
    <property type="evidence" value="ECO:0007669"/>
    <property type="project" value="UniProtKB-UniRule"/>
</dbReference>
<dbReference type="GO" id="GO:0004488">
    <property type="term" value="F:methylenetetrahydrofolate dehydrogenase (NADP+) activity"/>
    <property type="evidence" value="ECO:0007669"/>
    <property type="project" value="UniProtKB-UniRule"/>
</dbReference>
<dbReference type="GO" id="GO:0000105">
    <property type="term" value="P:L-histidine biosynthetic process"/>
    <property type="evidence" value="ECO:0007669"/>
    <property type="project" value="UniProtKB-KW"/>
</dbReference>
<dbReference type="GO" id="GO:0009086">
    <property type="term" value="P:methionine biosynthetic process"/>
    <property type="evidence" value="ECO:0007669"/>
    <property type="project" value="UniProtKB-KW"/>
</dbReference>
<dbReference type="GO" id="GO:0006164">
    <property type="term" value="P:purine nucleotide biosynthetic process"/>
    <property type="evidence" value="ECO:0007669"/>
    <property type="project" value="UniProtKB-KW"/>
</dbReference>
<dbReference type="GO" id="GO:0035999">
    <property type="term" value="P:tetrahydrofolate interconversion"/>
    <property type="evidence" value="ECO:0007669"/>
    <property type="project" value="UniProtKB-UniRule"/>
</dbReference>
<dbReference type="CDD" id="cd01080">
    <property type="entry name" value="NAD_bind_m-THF_DH_Cyclohyd"/>
    <property type="match status" value="1"/>
</dbReference>
<dbReference type="FunFam" id="3.40.50.10860:FF:000001">
    <property type="entry name" value="Bifunctional protein FolD"/>
    <property type="match status" value="1"/>
</dbReference>
<dbReference type="FunFam" id="3.40.50.720:FF:000006">
    <property type="entry name" value="Bifunctional protein FolD"/>
    <property type="match status" value="1"/>
</dbReference>
<dbReference type="Gene3D" id="3.40.50.10860">
    <property type="entry name" value="Leucine Dehydrogenase, chain A, domain 1"/>
    <property type="match status" value="1"/>
</dbReference>
<dbReference type="Gene3D" id="3.40.50.720">
    <property type="entry name" value="NAD(P)-binding Rossmann-like Domain"/>
    <property type="match status" value="1"/>
</dbReference>
<dbReference type="HAMAP" id="MF_01576">
    <property type="entry name" value="THF_DHG_CYH"/>
    <property type="match status" value="1"/>
</dbReference>
<dbReference type="InterPro" id="IPR046346">
    <property type="entry name" value="Aminoacid_DH-like_N_sf"/>
</dbReference>
<dbReference type="InterPro" id="IPR036291">
    <property type="entry name" value="NAD(P)-bd_dom_sf"/>
</dbReference>
<dbReference type="InterPro" id="IPR000672">
    <property type="entry name" value="THF_DH/CycHdrlase"/>
</dbReference>
<dbReference type="InterPro" id="IPR020630">
    <property type="entry name" value="THF_DH/CycHdrlase_cat_dom"/>
</dbReference>
<dbReference type="InterPro" id="IPR020867">
    <property type="entry name" value="THF_DH/CycHdrlase_CS"/>
</dbReference>
<dbReference type="InterPro" id="IPR020631">
    <property type="entry name" value="THF_DH/CycHdrlase_NAD-bd_dom"/>
</dbReference>
<dbReference type="NCBIfam" id="NF008058">
    <property type="entry name" value="PRK10792.1"/>
    <property type="match status" value="1"/>
</dbReference>
<dbReference type="NCBIfam" id="NF010783">
    <property type="entry name" value="PRK14186.1"/>
    <property type="match status" value="1"/>
</dbReference>
<dbReference type="PANTHER" id="PTHR48099:SF5">
    <property type="entry name" value="C-1-TETRAHYDROFOLATE SYNTHASE, CYTOPLASMIC"/>
    <property type="match status" value="1"/>
</dbReference>
<dbReference type="PANTHER" id="PTHR48099">
    <property type="entry name" value="C-1-TETRAHYDROFOLATE SYNTHASE, CYTOPLASMIC-RELATED"/>
    <property type="match status" value="1"/>
</dbReference>
<dbReference type="Pfam" id="PF00763">
    <property type="entry name" value="THF_DHG_CYH"/>
    <property type="match status" value="1"/>
</dbReference>
<dbReference type="Pfam" id="PF02882">
    <property type="entry name" value="THF_DHG_CYH_C"/>
    <property type="match status" value="1"/>
</dbReference>
<dbReference type="PRINTS" id="PR00085">
    <property type="entry name" value="THFDHDRGNASE"/>
</dbReference>
<dbReference type="SUPFAM" id="SSF53223">
    <property type="entry name" value="Aminoacid dehydrogenase-like, N-terminal domain"/>
    <property type="match status" value="1"/>
</dbReference>
<dbReference type="SUPFAM" id="SSF51735">
    <property type="entry name" value="NAD(P)-binding Rossmann-fold domains"/>
    <property type="match status" value="1"/>
</dbReference>
<dbReference type="PROSITE" id="PS00766">
    <property type="entry name" value="THF_DHG_CYH_1"/>
    <property type="match status" value="1"/>
</dbReference>
<dbReference type="PROSITE" id="PS00767">
    <property type="entry name" value="THF_DHG_CYH_2"/>
    <property type="match status" value="1"/>
</dbReference>
<gene>
    <name evidence="1" type="primary">folD</name>
    <name type="ordered locus">EcE24377A_0570</name>
</gene>
<reference key="1">
    <citation type="journal article" date="2008" name="J. Bacteriol.">
        <title>The pangenome structure of Escherichia coli: comparative genomic analysis of E. coli commensal and pathogenic isolates.</title>
        <authorList>
            <person name="Rasko D.A."/>
            <person name="Rosovitz M.J."/>
            <person name="Myers G.S.A."/>
            <person name="Mongodin E.F."/>
            <person name="Fricke W.F."/>
            <person name="Gajer P."/>
            <person name="Crabtree J."/>
            <person name="Sebaihia M."/>
            <person name="Thomson N.R."/>
            <person name="Chaudhuri R."/>
            <person name="Henderson I.R."/>
            <person name="Sperandio V."/>
            <person name="Ravel J."/>
        </authorList>
    </citation>
    <scope>NUCLEOTIDE SEQUENCE [LARGE SCALE GENOMIC DNA]</scope>
    <source>
        <strain>E24377A / ETEC</strain>
    </source>
</reference>
<keyword id="KW-0028">Amino-acid biosynthesis</keyword>
<keyword id="KW-0368">Histidine biosynthesis</keyword>
<keyword id="KW-0378">Hydrolase</keyword>
<keyword id="KW-0486">Methionine biosynthesis</keyword>
<keyword id="KW-0511">Multifunctional enzyme</keyword>
<keyword id="KW-0521">NADP</keyword>
<keyword id="KW-0554">One-carbon metabolism</keyword>
<keyword id="KW-0560">Oxidoreductase</keyword>
<keyword id="KW-0658">Purine biosynthesis</keyword>
<keyword id="KW-1185">Reference proteome</keyword>
<evidence type="ECO:0000255" key="1">
    <source>
        <dbReference type="HAMAP-Rule" id="MF_01576"/>
    </source>
</evidence>
<accession>A7ZIT8</accession>
<protein>
    <recommendedName>
        <fullName evidence="1">Bifunctional protein FolD</fullName>
    </recommendedName>
    <domain>
        <recommendedName>
            <fullName evidence="1">Methylenetetrahydrofolate dehydrogenase</fullName>
            <ecNumber evidence="1">1.5.1.5</ecNumber>
        </recommendedName>
    </domain>
    <domain>
        <recommendedName>
            <fullName evidence="1">Methenyltetrahydrofolate cyclohydrolase</fullName>
            <ecNumber evidence="1">3.5.4.9</ecNumber>
        </recommendedName>
    </domain>
</protein>